<comment type="catalytic activity">
    <reaction evidence="1">
        <text>D-erythro-1-(imidazol-4-yl)glycerol 3-phosphate = 3-(imidazol-4-yl)-2-oxopropyl phosphate + H2O</text>
        <dbReference type="Rhea" id="RHEA:11040"/>
        <dbReference type="ChEBI" id="CHEBI:15377"/>
        <dbReference type="ChEBI" id="CHEBI:57766"/>
        <dbReference type="ChEBI" id="CHEBI:58278"/>
        <dbReference type="EC" id="4.2.1.19"/>
    </reaction>
</comment>
<comment type="catalytic activity">
    <reaction evidence="1">
        <text>L-histidinol phosphate + H2O = L-histidinol + phosphate</text>
        <dbReference type="Rhea" id="RHEA:14465"/>
        <dbReference type="ChEBI" id="CHEBI:15377"/>
        <dbReference type="ChEBI" id="CHEBI:43474"/>
        <dbReference type="ChEBI" id="CHEBI:57699"/>
        <dbReference type="ChEBI" id="CHEBI:57980"/>
        <dbReference type="EC" id="3.1.3.15"/>
    </reaction>
</comment>
<comment type="cofactor">
    <cofactor evidence="1">
        <name>Mg(2+)</name>
        <dbReference type="ChEBI" id="CHEBI:18420"/>
    </cofactor>
</comment>
<comment type="cofactor">
    <cofactor evidence="1">
        <name>Zn(2+)</name>
        <dbReference type="ChEBI" id="CHEBI:29105"/>
    </cofactor>
</comment>
<comment type="pathway">
    <text evidence="1">Amino-acid biosynthesis; L-histidine biosynthesis; L-histidine from 5-phospho-alpha-D-ribose 1-diphosphate: step 6/9.</text>
</comment>
<comment type="pathway">
    <text evidence="1">Amino-acid biosynthesis; L-histidine biosynthesis; L-histidine from 5-phospho-alpha-D-ribose 1-diphosphate: step 8/9.</text>
</comment>
<comment type="subcellular location">
    <subcellularLocation>
        <location evidence="1">Cytoplasm</location>
    </subcellularLocation>
</comment>
<comment type="similarity">
    <text evidence="1">In the N-terminal section; belongs to the histidinol-phosphatase family.</text>
</comment>
<comment type="similarity">
    <text evidence="1">In the C-terminal section; belongs to the imidazoleglycerol-phosphate dehydratase family.</text>
</comment>
<gene>
    <name evidence="1" type="primary">hisB</name>
    <name type="ordered locus">YPO1546</name>
    <name type="ordered locus">y2623</name>
    <name type="ordered locus">YP_1435</name>
</gene>
<protein>
    <recommendedName>
        <fullName evidence="1">Histidine biosynthesis bifunctional protein HisB</fullName>
    </recommendedName>
    <domain>
        <recommendedName>
            <fullName evidence="1">Histidinol-phosphatase</fullName>
            <ecNumber evidence="1">3.1.3.15</ecNumber>
        </recommendedName>
    </domain>
    <domain>
        <recommendedName>
            <fullName evidence="1">Imidazoleglycerol-phosphate dehydratase</fullName>
            <shortName evidence="1">IGPD</shortName>
            <ecNumber evidence="1">4.2.1.19</ecNumber>
        </recommendedName>
    </domain>
</protein>
<feature type="chain" id="PRO_0000158231" description="Histidine biosynthesis bifunctional protein HisB">
    <location>
        <begin position="1"/>
        <end position="355"/>
    </location>
</feature>
<feature type="region of interest" description="Histidinol-phosphatase" evidence="1">
    <location>
        <begin position="1"/>
        <end position="166"/>
    </location>
</feature>
<feature type="region of interest" description="Imidazoleglycerol-phosphate dehydratase" evidence="1">
    <location>
        <begin position="167"/>
        <end position="355"/>
    </location>
</feature>
<feature type="active site" description="Nucleophile" evidence="1">
    <location>
        <position position="9"/>
    </location>
</feature>
<feature type="active site" description="Proton donor" evidence="1">
    <location>
        <position position="11"/>
    </location>
</feature>
<feature type="binding site" evidence="1">
    <location>
        <position position="9"/>
    </location>
    <ligand>
        <name>Mg(2+)</name>
        <dbReference type="ChEBI" id="CHEBI:18420"/>
    </ligand>
</feature>
<feature type="binding site" evidence="1">
    <location>
        <position position="11"/>
    </location>
    <ligand>
        <name>Mg(2+)</name>
        <dbReference type="ChEBI" id="CHEBI:18420"/>
    </ligand>
</feature>
<feature type="binding site" evidence="1">
    <location>
        <position position="93"/>
    </location>
    <ligand>
        <name>Zn(2+)</name>
        <dbReference type="ChEBI" id="CHEBI:29105"/>
    </ligand>
</feature>
<feature type="binding site" evidence="1">
    <location>
        <position position="95"/>
    </location>
    <ligand>
        <name>Zn(2+)</name>
        <dbReference type="ChEBI" id="CHEBI:29105"/>
    </ligand>
</feature>
<feature type="binding site" evidence="1">
    <location>
        <position position="101"/>
    </location>
    <ligand>
        <name>Zn(2+)</name>
        <dbReference type="ChEBI" id="CHEBI:29105"/>
    </ligand>
</feature>
<feature type="binding site" evidence="1">
    <location>
        <position position="103"/>
    </location>
    <ligand>
        <name>Zn(2+)</name>
        <dbReference type="ChEBI" id="CHEBI:29105"/>
    </ligand>
</feature>
<feature type="binding site" evidence="1">
    <location>
        <position position="130"/>
    </location>
    <ligand>
        <name>Mg(2+)</name>
        <dbReference type="ChEBI" id="CHEBI:18420"/>
    </ligand>
</feature>
<sequence>MSQKFLFIDRDGTIIAEPPTDYQVDRLDKLALEPDVIPALLALQKADYKLVMITNQDGLGTSSFPQETFDPPHNLMMQILTSQGINFEQILICPHLPEDNCTCRKPKTALVESYLADGVMNSTNSYVIGDRETDLQLAENMGISGLRYQRDGLNWTQIAKQLTQRDRHAYVNRVTKETAIDVNVWLDREGGSKIKTGVGFFDHMLDQIATHGGFRMDIQVSGDLYIDDHHTVEDTALALGEAINIALGDKRGIGRFGFVLPMDECLARCALDISGRPHLEYKAEFNYQRVGDLSTEMVEHFFRSLSYAMACTLHLKTKGRNDHHRVESLFKVFGRTLRQAIRVEGNTLPSSKGVL</sequence>
<evidence type="ECO:0000255" key="1">
    <source>
        <dbReference type="HAMAP-Rule" id="MF_01022"/>
    </source>
</evidence>
<reference key="1">
    <citation type="journal article" date="2001" name="Nature">
        <title>Genome sequence of Yersinia pestis, the causative agent of plague.</title>
        <authorList>
            <person name="Parkhill J."/>
            <person name="Wren B.W."/>
            <person name="Thomson N.R."/>
            <person name="Titball R.W."/>
            <person name="Holden M.T.G."/>
            <person name="Prentice M.B."/>
            <person name="Sebaihia M."/>
            <person name="James K.D."/>
            <person name="Churcher C.M."/>
            <person name="Mungall K.L."/>
            <person name="Baker S."/>
            <person name="Basham D."/>
            <person name="Bentley S.D."/>
            <person name="Brooks K."/>
            <person name="Cerdeno-Tarraga A.-M."/>
            <person name="Chillingworth T."/>
            <person name="Cronin A."/>
            <person name="Davies R.M."/>
            <person name="Davis P."/>
            <person name="Dougan G."/>
            <person name="Feltwell T."/>
            <person name="Hamlin N."/>
            <person name="Holroyd S."/>
            <person name="Jagels K."/>
            <person name="Karlyshev A.V."/>
            <person name="Leather S."/>
            <person name="Moule S."/>
            <person name="Oyston P.C.F."/>
            <person name="Quail M.A."/>
            <person name="Rutherford K.M."/>
            <person name="Simmonds M."/>
            <person name="Skelton J."/>
            <person name="Stevens K."/>
            <person name="Whitehead S."/>
            <person name="Barrell B.G."/>
        </authorList>
    </citation>
    <scope>NUCLEOTIDE SEQUENCE [LARGE SCALE GENOMIC DNA]</scope>
    <source>
        <strain>CO-92 / Biovar Orientalis</strain>
    </source>
</reference>
<reference key="2">
    <citation type="journal article" date="2002" name="J. Bacteriol.">
        <title>Genome sequence of Yersinia pestis KIM.</title>
        <authorList>
            <person name="Deng W."/>
            <person name="Burland V."/>
            <person name="Plunkett G. III"/>
            <person name="Boutin A."/>
            <person name="Mayhew G.F."/>
            <person name="Liss P."/>
            <person name="Perna N.T."/>
            <person name="Rose D.J."/>
            <person name="Mau B."/>
            <person name="Zhou S."/>
            <person name="Schwartz D.C."/>
            <person name="Fetherston J.D."/>
            <person name="Lindler L.E."/>
            <person name="Brubaker R.R."/>
            <person name="Plano G.V."/>
            <person name="Straley S.C."/>
            <person name="McDonough K.A."/>
            <person name="Nilles M.L."/>
            <person name="Matson J.S."/>
            <person name="Blattner F.R."/>
            <person name="Perry R.D."/>
        </authorList>
    </citation>
    <scope>NUCLEOTIDE SEQUENCE [LARGE SCALE GENOMIC DNA]</scope>
    <source>
        <strain>KIM10+ / Biovar Mediaevalis</strain>
    </source>
</reference>
<reference key="3">
    <citation type="journal article" date="2004" name="DNA Res.">
        <title>Complete genome sequence of Yersinia pestis strain 91001, an isolate avirulent to humans.</title>
        <authorList>
            <person name="Song Y."/>
            <person name="Tong Z."/>
            <person name="Wang J."/>
            <person name="Wang L."/>
            <person name="Guo Z."/>
            <person name="Han Y."/>
            <person name="Zhang J."/>
            <person name="Pei D."/>
            <person name="Zhou D."/>
            <person name="Qin H."/>
            <person name="Pang X."/>
            <person name="Han Y."/>
            <person name="Zhai J."/>
            <person name="Li M."/>
            <person name="Cui B."/>
            <person name="Qi Z."/>
            <person name="Jin L."/>
            <person name="Dai R."/>
            <person name="Chen F."/>
            <person name="Li S."/>
            <person name="Ye C."/>
            <person name="Du Z."/>
            <person name="Lin W."/>
            <person name="Wang J."/>
            <person name="Yu J."/>
            <person name="Yang H."/>
            <person name="Wang J."/>
            <person name="Huang P."/>
            <person name="Yang R."/>
        </authorList>
    </citation>
    <scope>NUCLEOTIDE SEQUENCE [LARGE SCALE GENOMIC DNA]</scope>
    <source>
        <strain>91001 / Biovar Mediaevalis</strain>
    </source>
</reference>
<name>HIS7_YERPE</name>
<organism>
    <name type="scientific">Yersinia pestis</name>
    <dbReference type="NCBI Taxonomy" id="632"/>
    <lineage>
        <taxon>Bacteria</taxon>
        <taxon>Pseudomonadati</taxon>
        <taxon>Pseudomonadota</taxon>
        <taxon>Gammaproteobacteria</taxon>
        <taxon>Enterobacterales</taxon>
        <taxon>Yersiniaceae</taxon>
        <taxon>Yersinia</taxon>
    </lineage>
</organism>
<accession>Q8ZFX7</accession>
<accession>Q0WGM6</accession>
<dbReference type="EC" id="3.1.3.15" evidence="1"/>
<dbReference type="EC" id="4.2.1.19" evidence="1"/>
<dbReference type="EMBL" id="AL590842">
    <property type="protein sequence ID" value="CAL20192.1"/>
    <property type="molecule type" value="Genomic_DNA"/>
</dbReference>
<dbReference type="EMBL" id="AE009952">
    <property type="protein sequence ID" value="AAM86177.1"/>
    <property type="molecule type" value="Genomic_DNA"/>
</dbReference>
<dbReference type="EMBL" id="AE017042">
    <property type="protein sequence ID" value="AAS61676.1"/>
    <property type="molecule type" value="Genomic_DNA"/>
</dbReference>
<dbReference type="PIR" id="AF0188">
    <property type="entry name" value="AF0188"/>
</dbReference>
<dbReference type="RefSeq" id="WP_002211893.1">
    <property type="nucleotide sequence ID" value="NZ_WUCM01000031.1"/>
</dbReference>
<dbReference type="RefSeq" id="YP_002346562.1">
    <property type="nucleotide sequence ID" value="NC_003143.1"/>
</dbReference>
<dbReference type="SMR" id="Q8ZFX7"/>
<dbReference type="STRING" id="214092.YPO1546"/>
<dbReference type="PaxDb" id="214092-YPO1546"/>
<dbReference type="DNASU" id="1147570"/>
<dbReference type="EnsemblBacteria" id="AAS61676">
    <property type="protein sequence ID" value="AAS61676"/>
    <property type="gene ID" value="YP_1435"/>
</dbReference>
<dbReference type="GeneID" id="57977022"/>
<dbReference type="KEGG" id="ype:YPO1546"/>
<dbReference type="KEGG" id="ypk:y2623"/>
<dbReference type="KEGG" id="ypm:YP_1435"/>
<dbReference type="PATRIC" id="fig|214092.21.peg.1883"/>
<dbReference type="eggNOG" id="COG0131">
    <property type="taxonomic scope" value="Bacteria"/>
</dbReference>
<dbReference type="eggNOG" id="COG0241">
    <property type="taxonomic scope" value="Bacteria"/>
</dbReference>
<dbReference type="HOGENOM" id="CLU_044308_0_0_6"/>
<dbReference type="OMA" id="PEDTFWP"/>
<dbReference type="OrthoDB" id="9790411at2"/>
<dbReference type="UniPathway" id="UPA00031">
    <property type="reaction ID" value="UER00011"/>
</dbReference>
<dbReference type="UniPathway" id="UPA00031">
    <property type="reaction ID" value="UER00013"/>
</dbReference>
<dbReference type="Proteomes" id="UP000000815">
    <property type="component" value="Chromosome"/>
</dbReference>
<dbReference type="Proteomes" id="UP000001019">
    <property type="component" value="Chromosome"/>
</dbReference>
<dbReference type="Proteomes" id="UP000002490">
    <property type="component" value="Chromosome"/>
</dbReference>
<dbReference type="GO" id="GO:0005737">
    <property type="term" value="C:cytoplasm"/>
    <property type="evidence" value="ECO:0007669"/>
    <property type="project" value="UniProtKB-SubCell"/>
</dbReference>
<dbReference type="GO" id="GO:0004401">
    <property type="term" value="F:histidinol-phosphatase activity"/>
    <property type="evidence" value="ECO:0007669"/>
    <property type="project" value="UniProtKB-UniRule"/>
</dbReference>
<dbReference type="GO" id="GO:0004424">
    <property type="term" value="F:imidazoleglycerol-phosphate dehydratase activity"/>
    <property type="evidence" value="ECO:0000318"/>
    <property type="project" value="GO_Central"/>
</dbReference>
<dbReference type="GO" id="GO:0046872">
    <property type="term" value="F:metal ion binding"/>
    <property type="evidence" value="ECO:0007669"/>
    <property type="project" value="UniProtKB-KW"/>
</dbReference>
<dbReference type="GO" id="GO:0000105">
    <property type="term" value="P:L-histidine biosynthetic process"/>
    <property type="evidence" value="ECO:0000318"/>
    <property type="project" value="GO_Central"/>
</dbReference>
<dbReference type="CDD" id="cd07503">
    <property type="entry name" value="HAD_HisB-N"/>
    <property type="match status" value="1"/>
</dbReference>
<dbReference type="CDD" id="cd07914">
    <property type="entry name" value="IGPD"/>
    <property type="match status" value="1"/>
</dbReference>
<dbReference type="FunFam" id="3.40.50.1000:FF:000061">
    <property type="entry name" value="Histidine biosynthesis bifunctional protein HisB"/>
    <property type="match status" value="1"/>
</dbReference>
<dbReference type="FunFam" id="3.30.230.40:FF:000001">
    <property type="entry name" value="Imidazoleglycerol-phosphate dehydratase HisB"/>
    <property type="match status" value="1"/>
</dbReference>
<dbReference type="FunFam" id="3.30.230.40:FF:000003">
    <property type="entry name" value="Imidazoleglycerol-phosphate dehydratase HisB"/>
    <property type="match status" value="1"/>
</dbReference>
<dbReference type="Gene3D" id="3.40.50.1000">
    <property type="entry name" value="HAD superfamily/HAD-like"/>
    <property type="match status" value="1"/>
</dbReference>
<dbReference type="Gene3D" id="3.30.230.40">
    <property type="entry name" value="Imidazole glycerol phosphate dehydratase, domain 1"/>
    <property type="match status" value="2"/>
</dbReference>
<dbReference type="HAMAP" id="MF_01022">
    <property type="entry name" value="Bifunc_HisB"/>
    <property type="match status" value="1"/>
</dbReference>
<dbReference type="HAMAP" id="MF_00076">
    <property type="entry name" value="HisB"/>
    <property type="match status" value="1"/>
</dbReference>
<dbReference type="InterPro" id="IPR036412">
    <property type="entry name" value="HAD-like_sf"/>
</dbReference>
<dbReference type="InterPro" id="IPR006549">
    <property type="entry name" value="HAD-SF_hydro_IIIA"/>
</dbReference>
<dbReference type="InterPro" id="IPR023214">
    <property type="entry name" value="HAD_sf"/>
</dbReference>
<dbReference type="InterPro" id="IPR020566">
    <property type="entry name" value="His_synth_bifunc_HisB"/>
</dbReference>
<dbReference type="InterPro" id="IPR005954">
    <property type="entry name" value="HisB_N"/>
</dbReference>
<dbReference type="InterPro" id="IPR006543">
    <property type="entry name" value="Histidinol-phos"/>
</dbReference>
<dbReference type="InterPro" id="IPR038494">
    <property type="entry name" value="IGPD_sf"/>
</dbReference>
<dbReference type="InterPro" id="IPR000807">
    <property type="entry name" value="ImidazoleglycerolP_deHydtase"/>
</dbReference>
<dbReference type="InterPro" id="IPR020565">
    <property type="entry name" value="ImidazoleglycerP_deHydtase_CS"/>
</dbReference>
<dbReference type="InterPro" id="IPR020568">
    <property type="entry name" value="Ribosomal_Su5_D2-typ_SF"/>
</dbReference>
<dbReference type="NCBIfam" id="TIGR01662">
    <property type="entry name" value="HAD-SF-IIIA"/>
    <property type="match status" value="1"/>
</dbReference>
<dbReference type="NCBIfam" id="TIGR01261">
    <property type="entry name" value="hisB_Nterm"/>
    <property type="match status" value="1"/>
</dbReference>
<dbReference type="NCBIfam" id="TIGR01656">
    <property type="entry name" value="Histidinol-ppas"/>
    <property type="match status" value="1"/>
</dbReference>
<dbReference type="NCBIfam" id="NF002111">
    <property type="entry name" value="PRK00951.2-1"/>
    <property type="match status" value="1"/>
</dbReference>
<dbReference type="NCBIfam" id="NF003937">
    <property type="entry name" value="PRK05446.1"/>
    <property type="match status" value="1"/>
</dbReference>
<dbReference type="PANTHER" id="PTHR23133:SF2">
    <property type="entry name" value="IMIDAZOLEGLYCEROL-PHOSPHATE DEHYDRATASE"/>
    <property type="match status" value="1"/>
</dbReference>
<dbReference type="PANTHER" id="PTHR23133">
    <property type="entry name" value="IMIDAZOLEGLYCEROL-PHOSPHATE DEHYDRATASE HIS7"/>
    <property type="match status" value="1"/>
</dbReference>
<dbReference type="Pfam" id="PF13242">
    <property type="entry name" value="Hydrolase_like"/>
    <property type="match status" value="1"/>
</dbReference>
<dbReference type="Pfam" id="PF00475">
    <property type="entry name" value="IGPD"/>
    <property type="match status" value="1"/>
</dbReference>
<dbReference type="SUPFAM" id="SSF56784">
    <property type="entry name" value="HAD-like"/>
    <property type="match status" value="1"/>
</dbReference>
<dbReference type="SUPFAM" id="SSF54211">
    <property type="entry name" value="Ribosomal protein S5 domain 2-like"/>
    <property type="match status" value="2"/>
</dbReference>
<dbReference type="PROSITE" id="PS00954">
    <property type="entry name" value="IGP_DEHYDRATASE_1"/>
    <property type="match status" value="1"/>
</dbReference>
<dbReference type="PROSITE" id="PS00955">
    <property type="entry name" value="IGP_DEHYDRATASE_2"/>
    <property type="match status" value="1"/>
</dbReference>
<proteinExistence type="inferred from homology"/>
<keyword id="KW-0028">Amino-acid biosynthesis</keyword>
<keyword id="KW-0963">Cytoplasm</keyword>
<keyword id="KW-0368">Histidine biosynthesis</keyword>
<keyword id="KW-0378">Hydrolase</keyword>
<keyword id="KW-0456">Lyase</keyword>
<keyword id="KW-0460">Magnesium</keyword>
<keyword id="KW-0479">Metal-binding</keyword>
<keyword id="KW-0511">Multifunctional enzyme</keyword>
<keyword id="KW-1185">Reference proteome</keyword>
<keyword id="KW-0862">Zinc</keyword>